<feature type="chain" id="PRO_0000182902" description="Deoxyuridine 5'-triphosphate nucleotidohydrolase">
    <location>
        <begin position="1"/>
        <end position="148"/>
    </location>
</feature>
<feature type="binding site" evidence="1">
    <location>
        <begin position="68"/>
        <end position="70"/>
    </location>
    <ligand>
        <name>substrate</name>
    </ligand>
</feature>
<feature type="binding site" evidence="1">
    <location>
        <position position="81"/>
    </location>
    <ligand>
        <name>substrate</name>
    </ligand>
</feature>
<feature type="binding site" evidence="1">
    <location>
        <begin position="85"/>
        <end position="87"/>
    </location>
    <ligand>
        <name>substrate</name>
    </ligand>
</feature>
<feature type="binding site" evidence="1">
    <location>
        <position position="95"/>
    </location>
    <ligand>
        <name>substrate</name>
    </ligand>
</feature>
<evidence type="ECO:0000255" key="1">
    <source>
        <dbReference type="HAMAP-Rule" id="MF_00116"/>
    </source>
</evidence>
<sequence length="148" mass="15976">MTITQVKIKKLENFSGSLPEYATEHSAGMDLIAANEQPITIKAAAIQLIPTGIAIALPDSFEAQIRPRSGLAVKHGITVANSPGTIDADYRGEIKVILINLGKEDFIIEKGMRIAQMIIAKYERILWEESSSLMETMRGSGGFGSTGV</sequence>
<proteinExistence type="inferred from homology"/>
<keyword id="KW-0378">Hydrolase</keyword>
<keyword id="KW-0460">Magnesium</keyword>
<keyword id="KW-0479">Metal-binding</keyword>
<keyword id="KW-0546">Nucleotide metabolism</keyword>
<dbReference type="EC" id="3.6.1.23" evidence="1"/>
<dbReference type="EMBL" id="AE006914">
    <property type="protein sequence ID" value="AAL03084.1"/>
    <property type="molecule type" value="Genomic_DNA"/>
</dbReference>
<dbReference type="PIR" id="B97768">
    <property type="entry name" value="B97768"/>
</dbReference>
<dbReference type="RefSeq" id="WP_010977182.1">
    <property type="nucleotide sequence ID" value="NC_003103.1"/>
</dbReference>
<dbReference type="SMR" id="Q92I74"/>
<dbReference type="GeneID" id="928753"/>
<dbReference type="KEGG" id="rco:RC0546"/>
<dbReference type="HOGENOM" id="CLU_068508_1_2_5"/>
<dbReference type="UniPathway" id="UPA00610">
    <property type="reaction ID" value="UER00666"/>
</dbReference>
<dbReference type="Proteomes" id="UP000000816">
    <property type="component" value="Chromosome"/>
</dbReference>
<dbReference type="GO" id="GO:0004170">
    <property type="term" value="F:dUTP diphosphatase activity"/>
    <property type="evidence" value="ECO:0007669"/>
    <property type="project" value="UniProtKB-UniRule"/>
</dbReference>
<dbReference type="GO" id="GO:0000287">
    <property type="term" value="F:magnesium ion binding"/>
    <property type="evidence" value="ECO:0007669"/>
    <property type="project" value="UniProtKB-UniRule"/>
</dbReference>
<dbReference type="GO" id="GO:0006226">
    <property type="term" value="P:dUMP biosynthetic process"/>
    <property type="evidence" value="ECO:0007669"/>
    <property type="project" value="UniProtKB-UniRule"/>
</dbReference>
<dbReference type="GO" id="GO:0046081">
    <property type="term" value="P:dUTP catabolic process"/>
    <property type="evidence" value="ECO:0007669"/>
    <property type="project" value="InterPro"/>
</dbReference>
<dbReference type="CDD" id="cd07557">
    <property type="entry name" value="trimeric_dUTPase"/>
    <property type="match status" value="1"/>
</dbReference>
<dbReference type="FunFam" id="2.70.40.10:FF:000002">
    <property type="entry name" value="dUTP diphosphatase"/>
    <property type="match status" value="1"/>
</dbReference>
<dbReference type="Gene3D" id="2.70.40.10">
    <property type="match status" value="1"/>
</dbReference>
<dbReference type="HAMAP" id="MF_00116">
    <property type="entry name" value="dUTPase_bact"/>
    <property type="match status" value="1"/>
</dbReference>
<dbReference type="InterPro" id="IPR008181">
    <property type="entry name" value="dUTPase"/>
</dbReference>
<dbReference type="InterPro" id="IPR029054">
    <property type="entry name" value="dUTPase-like"/>
</dbReference>
<dbReference type="InterPro" id="IPR036157">
    <property type="entry name" value="dUTPase-like_sf"/>
</dbReference>
<dbReference type="InterPro" id="IPR033704">
    <property type="entry name" value="dUTPase_trimeric"/>
</dbReference>
<dbReference type="NCBIfam" id="TIGR00576">
    <property type="entry name" value="dut"/>
    <property type="match status" value="1"/>
</dbReference>
<dbReference type="NCBIfam" id="NF001862">
    <property type="entry name" value="PRK00601.1"/>
    <property type="match status" value="1"/>
</dbReference>
<dbReference type="PANTHER" id="PTHR11241">
    <property type="entry name" value="DEOXYURIDINE 5'-TRIPHOSPHATE NUCLEOTIDOHYDROLASE"/>
    <property type="match status" value="1"/>
</dbReference>
<dbReference type="PANTHER" id="PTHR11241:SF0">
    <property type="entry name" value="DEOXYURIDINE 5'-TRIPHOSPHATE NUCLEOTIDOHYDROLASE"/>
    <property type="match status" value="1"/>
</dbReference>
<dbReference type="Pfam" id="PF00692">
    <property type="entry name" value="dUTPase"/>
    <property type="match status" value="1"/>
</dbReference>
<dbReference type="SUPFAM" id="SSF51283">
    <property type="entry name" value="dUTPase-like"/>
    <property type="match status" value="1"/>
</dbReference>
<reference key="1">
    <citation type="journal article" date="2001" name="Science">
        <title>Mechanisms of evolution in Rickettsia conorii and R. prowazekii.</title>
        <authorList>
            <person name="Ogata H."/>
            <person name="Audic S."/>
            <person name="Renesto-Audiffren P."/>
            <person name="Fournier P.-E."/>
            <person name="Barbe V."/>
            <person name="Samson D."/>
            <person name="Roux V."/>
            <person name="Cossart P."/>
            <person name="Weissenbach J."/>
            <person name="Claverie J.-M."/>
            <person name="Raoult D."/>
        </authorList>
    </citation>
    <scope>NUCLEOTIDE SEQUENCE [LARGE SCALE GENOMIC DNA]</scope>
    <source>
        <strain>ATCC VR-613 / Malish 7</strain>
    </source>
</reference>
<gene>
    <name evidence="1" type="primary">dut</name>
    <name type="ordered locus">RC0546</name>
</gene>
<accession>Q92I74</accession>
<organism>
    <name type="scientific">Rickettsia conorii (strain ATCC VR-613 / Malish 7)</name>
    <dbReference type="NCBI Taxonomy" id="272944"/>
    <lineage>
        <taxon>Bacteria</taxon>
        <taxon>Pseudomonadati</taxon>
        <taxon>Pseudomonadota</taxon>
        <taxon>Alphaproteobacteria</taxon>
        <taxon>Rickettsiales</taxon>
        <taxon>Rickettsiaceae</taxon>
        <taxon>Rickettsieae</taxon>
        <taxon>Rickettsia</taxon>
        <taxon>spotted fever group</taxon>
    </lineage>
</organism>
<name>DUT_RICCN</name>
<comment type="function">
    <text evidence="1">This enzyme is involved in nucleotide metabolism: it produces dUMP, the immediate precursor of thymidine nucleotides and it decreases the intracellular concentration of dUTP so that uracil cannot be incorporated into DNA.</text>
</comment>
<comment type="catalytic activity">
    <reaction evidence="1">
        <text>dUTP + H2O = dUMP + diphosphate + H(+)</text>
        <dbReference type="Rhea" id="RHEA:10248"/>
        <dbReference type="ChEBI" id="CHEBI:15377"/>
        <dbReference type="ChEBI" id="CHEBI:15378"/>
        <dbReference type="ChEBI" id="CHEBI:33019"/>
        <dbReference type="ChEBI" id="CHEBI:61555"/>
        <dbReference type="ChEBI" id="CHEBI:246422"/>
        <dbReference type="EC" id="3.6.1.23"/>
    </reaction>
</comment>
<comment type="cofactor">
    <cofactor evidence="1">
        <name>Mg(2+)</name>
        <dbReference type="ChEBI" id="CHEBI:18420"/>
    </cofactor>
</comment>
<comment type="pathway">
    <text evidence="1">Pyrimidine metabolism; dUMP biosynthesis; dUMP from dCTP (dUTP route): step 2/2.</text>
</comment>
<comment type="similarity">
    <text evidence="1">Belongs to the dUTPase family.</text>
</comment>
<protein>
    <recommendedName>
        <fullName evidence="1">Deoxyuridine 5'-triphosphate nucleotidohydrolase</fullName>
        <shortName evidence="1">dUTPase</shortName>
        <ecNumber evidence="1">3.6.1.23</ecNumber>
    </recommendedName>
    <alternativeName>
        <fullName evidence="1">dUTP pyrophosphatase</fullName>
    </alternativeName>
</protein>